<sequence length="803" mass="88731">MANVSKKVSWSGRDRDDEEGAPLLRRTGQPDEETPLLNGAGPGARQSHSALFRIGQMNNVELDDELLDPEVDPPHTFPKEIPHNEKLLSLKYESLDYDNSENQLFLEEERRINHTAFRTVEIKRWVICALIGILTGLVACFIDIVVENLAGLKYRVIKDNIDKFTEKGGLSFSLLLWATLNSAFVLVGSVIVAFIEPVAAGSGIPQIKCFLNGVKIPHVVRLKTLVIKVSGVILSVVGGLAVGKEGPMIHSGSVIAAGISQGRSTSLKRDFKIFEYFRRDTEKRDFVSAGAAAGVSAAFGAPVGGVLFSLEEGASFWNQFLTWRIFFASMISTFTLNFVLSIYHGNMWDLSSPGLINFGRFDSEKMAYTIHEIPVFIAMGVVGGILGAVFNALNYWLTMFRIRYIHRPCLQVIEAMLVAAVTATVAFVLIYSSRDCQPLQGSSMSYPLQLFCADGEYNSMAAAFFNTPEKSVVSLFHDPPGSYNPMTLGLFTLVYFFLACWTYGLTVSAGVFIPSLLIGAAWGRLFGISMSYLTGAAIWADPGKYALMGAAAQLGGIVRMTLSLTVIMMEATSNVTYGFPIMLVLMTAKIVGDVFIEGLYDMHIQLQSVPFLHWEAPVTSHSLTAREVMSTPVTCLRRREKVGIIVDVLSDTASNHNGFPVVEDVGDTQPARLQGLILRSQLIVLLKHKVFVERSNMGLVQRRLRLKDFRDAYPRFPPIQSIHVSQDERECTMDLSEFMNPSPYTVPQEASLPRVFKLFRALGLRHLVVVDNHNQVVGLVTRKDLARYRLGKGGLEELSLAQT</sequence>
<name>CLCN7_RAT</name>
<reference key="1">
    <citation type="journal article" date="1995" name="FEBS Lett.">
        <title>ClC-6 and ClC-7 are two novel broadly expressed members of the CLC chloride channel family.</title>
        <authorList>
            <person name="Brandt S."/>
            <person name="Jentsch T.J."/>
        </authorList>
    </citation>
    <scope>NUCLEOTIDE SEQUENCE [MRNA]</scope>
    <source>
        <tissue>Brain</tissue>
    </source>
</reference>
<reference key="2">
    <citation type="journal article" date="2006" name="J. Cell. Physiol.">
        <title>Intracellular localization of ClC chloride channels and their ability to form hetero-oligomers.</title>
        <authorList>
            <person name="Suzuki T."/>
            <person name="Rai T."/>
            <person name="Hayama A."/>
            <person name="Sohara E."/>
            <person name="Suda S."/>
            <person name="Itoh T."/>
            <person name="Sasaki S."/>
            <person name="Uchida S."/>
        </authorList>
    </citation>
    <scope>SUBCELLULAR LOCATION</scope>
</reference>
<reference key="3">
    <citation type="journal article" date="2008" name="Nature">
        <title>The Cl-/H+ antiporter ClC-7 is the primary chloride permeation pathway in lysosomes.</title>
        <authorList>
            <person name="Graves A.R."/>
            <person name="Curran P.K."/>
            <person name="Smith C.L."/>
            <person name="Mindell J.A."/>
        </authorList>
    </citation>
    <scope>FUNCTION</scope>
    <scope>SUBCELLULAR LOCATION</scope>
</reference>
<proteinExistence type="evidence at transcript level"/>
<keyword id="KW-0050">Antiport</keyword>
<keyword id="KW-0067">ATP-binding</keyword>
<keyword id="KW-0129">CBS domain</keyword>
<keyword id="KW-0868">Chloride</keyword>
<keyword id="KW-0406">Ion transport</keyword>
<keyword id="KW-0458">Lysosome</keyword>
<keyword id="KW-0472">Membrane</keyword>
<keyword id="KW-0547">Nucleotide-binding</keyword>
<keyword id="KW-0597">Phosphoprotein</keyword>
<keyword id="KW-1185">Reference proteome</keyword>
<keyword id="KW-0677">Repeat</keyword>
<keyword id="KW-0812">Transmembrane</keyword>
<keyword id="KW-1133">Transmembrane helix</keyword>
<keyword id="KW-0813">Transport</keyword>
<organism>
    <name type="scientific">Rattus norvegicus</name>
    <name type="common">Rat</name>
    <dbReference type="NCBI Taxonomy" id="10116"/>
    <lineage>
        <taxon>Eukaryota</taxon>
        <taxon>Metazoa</taxon>
        <taxon>Chordata</taxon>
        <taxon>Craniata</taxon>
        <taxon>Vertebrata</taxon>
        <taxon>Euteleostomi</taxon>
        <taxon>Mammalia</taxon>
        <taxon>Eutheria</taxon>
        <taxon>Euarchontoglires</taxon>
        <taxon>Glires</taxon>
        <taxon>Rodentia</taxon>
        <taxon>Myomorpha</taxon>
        <taxon>Muroidea</taxon>
        <taxon>Muridae</taxon>
        <taxon>Murinae</taxon>
        <taxon>Rattus</taxon>
    </lineage>
</organism>
<dbReference type="EMBL" id="Z67744">
    <property type="protein sequence ID" value="CAA91557.1"/>
    <property type="molecule type" value="mRNA"/>
</dbReference>
<dbReference type="PIR" id="S68426">
    <property type="entry name" value="S68426"/>
</dbReference>
<dbReference type="RefSeq" id="NP_113756.1">
    <property type="nucleotide sequence ID" value="NM_031568.2"/>
</dbReference>
<dbReference type="SMR" id="P51799"/>
<dbReference type="FunCoup" id="P51799">
    <property type="interactions" value="1370"/>
</dbReference>
<dbReference type="IntAct" id="P51799">
    <property type="interactions" value="2"/>
</dbReference>
<dbReference type="MINT" id="P51799"/>
<dbReference type="STRING" id="10116.ENSRNOP00000023615"/>
<dbReference type="iPTMnet" id="P51799"/>
<dbReference type="PhosphoSitePlus" id="P51799"/>
<dbReference type="jPOST" id="P51799"/>
<dbReference type="PaxDb" id="10116-ENSRNOP00000023615"/>
<dbReference type="GeneID" id="29233"/>
<dbReference type="KEGG" id="rno:29233"/>
<dbReference type="UCSC" id="RGD:61836">
    <property type="organism name" value="rat"/>
</dbReference>
<dbReference type="AGR" id="RGD:61836"/>
<dbReference type="CTD" id="1186"/>
<dbReference type="RGD" id="61836">
    <property type="gene designation" value="Clcn7"/>
</dbReference>
<dbReference type="VEuPathDB" id="HostDB:ENSRNOG00000016976"/>
<dbReference type="eggNOG" id="KOG0474">
    <property type="taxonomic scope" value="Eukaryota"/>
</dbReference>
<dbReference type="HOGENOM" id="CLU_003181_4_1_1"/>
<dbReference type="InParanoid" id="P51799"/>
<dbReference type="OrthoDB" id="39166at9989"/>
<dbReference type="PhylomeDB" id="P51799"/>
<dbReference type="TreeFam" id="TF313867"/>
<dbReference type="Reactome" id="R-RNO-2672351">
    <property type="pathway name" value="Stimuli-sensing channels"/>
</dbReference>
<dbReference type="PRO" id="PR:P51799"/>
<dbReference type="Proteomes" id="UP000002494">
    <property type="component" value="Chromosome 10"/>
</dbReference>
<dbReference type="Bgee" id="ENSRNOG00000016976">
    <property type="expression patterns" value="Expressed in frontal cortex and 19 other cell types or tissues"/>
</dbReference>
<dbReference type="GO" id="GO:0034707">
    <property type="term" value="C:chloride channel complex"/>
    <property type="evidence" value="ECO:0000266"/>
    <property type="project" value="RGD"/>
</dbReference>
<dbReference type="GO" id="GO:0043231">
    <property type="term" value="C:intracellular membrane-bounded organelle"/>
    <property type="evidence" value="ECO:0000318"/>
    <property type="project" value="GO_Central"/>
</dbReference>
<dbReference type="GO" id="GO:0005765">
    <property type="term" value="C:lysosomal membrane"/>
    <property type="evidence" value="ECO:0000266"/>
    <property type="project" value="RGD"/>
</dbReference>
<dbReference type="GO" id="GO:0005524">
    <property type="term" value="F:ATP binding"/>
    <property type="evidence" value="ECO:0007669"/>
    <property type="project" value="UniProtKB-KW"/>
</dbReference>
<dbReference type="GO" id="GO:0015108">
    <property type="term" value="F:chloride transmembrane transporter activity"/>
    <property type="evidence" value="ECO:0000318"/>
    <property type="project" value="GO_Central"/>
</dbReference>
<dbReference type="GO" id="GO:0062158">
    <property type="term" value="F:chloride:proton antiporter activity"/>
    <property type="evidence" value="ECO:0007669"/>
    <property type="project" value="InterPro"/>
</dbReference>
<dbReference type="GO" id="GO:0009268">
    <property type="term" value="P:response to pH"/>
    <property type="evidence" value="ECO:0000314"/>
    <property type="project" value="RGD"/>
</dbReference>
<dbReference type="GO" id="GO:0030321">
    <property type="term" value="P:transepithelial chloride transport"/>
    <property type="evidence" value="ECO:0000266"/>
    <property type="project" value="RGD"/>
</dbReference>
<dbReference type="CDD" id="cd04591">
    <property type="entry name" value="CBS_pair_voltage-gated_CLC_euk_bac"/>
    <property type="match status" value="1"/>
</dbReference>
<dbReference type="CDD" id="cd03685">
    <property type="entry name" value="ClC_6_like"/>
    <property type="match status" value="1"/>
</dbReference>
<dbReference type="FunFam" id="3.10.580.10:FF:000076">
    <property type="entry name" value="Chloride channel protein"/>
    <property type="match status" value="1"/>
</dbReference>
<dbReference type="Gene3D" id="3.10.580.10">
    <property type="entry name" value="CBS-domain"/>
    <property type="match status" value="1"/>
</dbReference>
<dbReference type="Gene3D" id="1.10.3080.10">
    <property type="entry name" value="Clc chloride channel"/>
    <property type="match status" value="1"/>
</dbReference>
<dbReference type="InterPro" id="IPR000644">
    <property type="entry name" value="CBS_dom"/>
</dbReference>
<dbReference type="InterPro" id="IPR046342">
    <property type="entry name" value="CBS_dom_sf"/>
</dbReference>
<dbReference type="InterPro" id="IPR002249">
    <property type="entry name" value="CIC-7"/>
</dbReference>
<dbReference type="InterPro" id="IPR051280">
    <property type="entry name" value="Cl-channel/antiporter"/>
</dbReference>
<dbReference type="InterPro" id="IPR014743">
    <property type="entry name" value="Cl-channel_core"/>
</dbReference>
<dbReference type="InterPro" id="IPR001807">
    <property type="entry name" value="ClC"/>
</dbReference>
<dbReference type="PANTHER" id="PTHR11689">
    <property type="entry name" value="CHLORIDE CHANNEL PROTEIN CLC FAMILY MEMBER"/>
    <property type="match status" value="1"/>
</dbReference>
<dbReference type="PANTHER" id="PTHR11689:SF136">
    <property type="entry name" value="H(+)_CL(-) EXCHANGE TRANSPORTER 7"/>
    <property type="match status" value="1"/>
</dbReference>
<dbReference type="Pfam" id="PF00571">
    <property type="entry name" value="CBS"/>
    <property type="match status" value="1"/>
</dbReference>
<dbReference type="Pfam" id="PF00654">
    <property type="entry name" value="Voltage_CLC"/>
    <property type="match status" value="1"/>
</dbReference>
<dbReference type="PRINTS" id="PR00762">
    <property type="entry name" value="CLCHANNEL"/>
</dbReference>
<dbReference type="PRINTS" id="PR01118">
    <property type="entry name" value="CLCHANNEL7"/>
</dbReference>
<dbReference type="SMART" id="SM00116">
    <property type="entry name" value="CBS"/>
    <property type="match status" value="2"/>
</dbReference>
<dbReference type="SUPFAM" id="SSF54631">
    <property type="entry name" value="CBS-domain pair"/>
    <property type="match status" value="1"/>
</dbReference>
<dbReference type="SUPFAM" id="SSF81340">
    <property type="entry name" value="Clc chloride channel"/>
    <property type="match status" value="1"/>
</dbReference>
<dbReference type="PROSITE" id="PS51371">
    <property type="entry name" value="CBS"/>
    <property type="match status" value="2"/>
</dbReference>
<protein>
    <recommendedName>
        <fullName>H(+)/Cl(-) exchange transporter 7</fullName>
    </recommendedName>
    <alternativeName>
        <fullName>Chloride channel 7 alpha subunit</fullName>
    </alternativeName>
    <alternativeName>
        <fullName>Chloride channel protein 7</fullName>
        <shortName>ClC-7</shortName>
    </alternativeName>
</protein>
<accession>P51799</accession>
<gene>
    <name type="primary">Clcn7</name>
</gene>
<feature type="chain" id="PRO_0000094454" description="H(+)/Cl(-) exchange transporter 7">
    <location>
        <begin position="1"/>
        <end position="803"/>
    </location>
</feature>
<feature type="topological domain" description="Cytoplasmic" evidence="1">
    <location>
        <begin position="1"/>
        <end position="124"/>
    </location>
</feature>
<feature type="transmembrane region" description="Helical" evidence="1">
    <location>
        <begin position="125"/>
        <end position="157"/>
    </location>
</feature>
<feature type="transmembrane region" description="Helical" evidence="1">
    <location>
        <begin position="172"/>
        <end position="195"/>
    </location>
</feature>
<feature type="intramembrane region" description="Helical" evidence="1">
    <location>
        <begin position="204"/>
        <end position="211"/>
    </location>
</feature>
<feature type="transmembrane region" description="Helical" evidence="1">
    <location>
        <begin position="221"/>
        <end position="239"/>
    </location>
</feature>
<feature type="transmembrane region" description="Helical" evidence="1">
    <location>
        <begin position="245"/>
        <end position="262"/>
    </location>
</feature>
<feature type="intramembrane region" description="Helical" evidence="1">
    <location>
        <begin position="286"/>
        <end position="298"/>
    </location>
</feature>
<feature type="intramembrane region" description="Helical" evidence="1">
    <location>
        <begin position="302"/>
        <end position="310"/>
    </location>
</feature>
<feature type="transmembrane region" description="Helical" evidence="1">
    <location>
        <begin position="320"/>
        <end position="339"/>
    </location>
</feature>
<feature type="transmembrane region" description="Helical" evidence="1">
    <location>
        <begin position="373"/>
        <end position="403"/>
    </location>
</feature>
<feature type="transmembrane region" description="Helical" evidence="1">
    <location>
        <begin position="408"/>
        <end position="430"/>
    </location>
</feature>
<feature type="transmembrane region" description="Helical" evidence="1">
    <location>
        <begin position="485"/>
        <end position="505"/>
    </location>
</feature>
<feature type="transmembrane region" description="Helical" evidence="1">
    <location>
        <begin position="510"/>
        <end position="533"/>
    </location>
</feature>
<feature type="intramembrane region" description="Helical" evidence="1">
    <location>
        <begin position="543"/>
        <end position="557"/>
    </location>
</feature>
<feature type="intramembrane region" description="Note=Loop between two helices" evidence="1">
    <location>
        <begin position="558"/>
        <end position="560"/>
    </location>
</feature>
<feature type="intramembrane region" description="Helical" evidence="1">
    <location>
        <begin position="561"/>
        <end position="572"/>
    </location>
</feature>
<feature type="intramembrane region" description="Note=Loop between two helices" evidence="1">
    <location>
        <begin position="573"/>
        <end position="576"/>
    </location>
</feature>
<feature type="transmembrane region" description="Helical" evidence="1">
    <location>
        <begin position="577"/>
        <end position="595"/>
    </location>
</feature>
<feature type="topological domain" description="Cytoplasmic" evidence="1">
    <location>
        <begin position="596"/>
        <end position="803"/>
    </location>
</feature>
<feature type="domain" description="CBS 1" evidence="5">
    <location>
        <begin position="629"/>
        <end position="693"/>
    </location>
</feature>
<feature type="domain" description="CBS 2" evidence="5">
    <location>
        <begin position="739"/>
        <end position="797"/>
    </location>
</feature>
<feature type="region of interest" description="Disordered" evidence="6">
    <location>
        <begin position="1"/>
        <end position="46"/>
    </location>
</feature>
<feature type="short sequence motif" description="Selectivity filter part_1" evidence="1">
    <location>
        <begin position="201"/>
        <end position="205"/>
    </location>
</feature>
<feature type="short sequence motif" description="Selectivity filter part_2" evidence="1">
    <location>
        <begin position="243"/>
        <end position="247"/>
    </location>
</feature>
<feature type="short sequence motif" description="Selectivity filter part_3" evidence="1">
    <location>
        <begin position="510"/>
        <end position="514"/>
    </location>
</feature>
<feature type="binding site" evidence="1">
    <location>
        <position position="202"/>
    </location>
    <ligand>
        <name>chloride</name>
        <dbReference type="ChEBI" id="CHEBI:17996"/>
    </ligand>
</feature>
<feature type="binding site" evidence="1">
    <location>
        <position position="512"/>
    </location>
    <ligand>
        <name>chloride</name>
        <dbReference type="ChEBI" id="CHEBI:17996"/>
    </ligand>
</feature>
<feature type="binding site" evidence="1">
    <location>
        <position position="600"/>
    </location>
    <ligand>
        <name>chloride</name>
        <dbReference type="ChEBI" id="CHEBI:17996"/>
    </ligand>
</feature>
<feature type="binding site" evidence="1">
    <location>
        <begin position="656"/>
        <end position="658"/>
    </location>
    <ligand>
        <name>ATP</name>
        <dbReference type="ChEBI" id="CHEBI:30616"/>
    </ligand>
</feature>
<feature type="binding site" evidence="1">
    <location>
        <begin position="781"/>
        <end position="784"/>
    </location>
    <ligand>
        <name>ATP</name>
        <dbReference type="ChEBI" id="CHEBI:30616"/>
    </ligand>
</feature>
<feature type="site" description="Mediates proton transfer from the outer aqueous phase to the interior of the protein; involved in linking H(+) and Cl(-) transport" evidence="1">
    <location>
        <position position="245"/>
    </location>
</feature>
<feature type="site" description="Mediates proton transfer from the protein to the inner aqueous phase" evidence="1">
    <location>
        <position position="312"/>
    </location>
</feature>
<feature type="modified residue" description="Phosphoserine" evidence="2">
    <location>
        <position position="9"/>
    </location>
</feature>
<feature type="modified residue" description="Phosphoserine" evidence="4">
    <location>
        <position position="799"/>
    </location>
</feature>
<comment type="function">
    <text evidence="2 3 8">Slowly voltage-gated channel mediating the exchange of chloride ions against protons (PubMed:18449189). Functions as antiporter and contributes to the acidification of the lysosome lumen and may be involved in maintaining lysosomal pH (By similarity). The CLC channel family contains both chloride channels and proton-coupled anion transporters that exchange chloride or another anion for protons (PubMed:18449189). The presence of conserved gating glutamate residues is typical for family members that function as antiporters (By similarity).</text>
</comment>
<comment type="catalytic activity">
    <reaction evidence="4">
        <text>2 chloride(in) + H(+)(out) = 2 chloride(out) + H(+)(in)</text>
        <dbReference type="Rhea" id="RHEA:29567"/>
        <dbReference type="ChEBI" id="CHEBI:15378"/>
        <dbReference type="ChEBI" id="CHEBI:17996"/>
    </reaction>
</comment>
<comment type="subunit">
    <text evidence="1">Chloride channel 7 are heteromers of alpha (CLCN7) and beta (OSTM1) subunits.</text>
</comment>
<comment type="subcellular location">
    <subcellularLocation>
        <location evidence="7 8">Lysosome membrane</location>
        <topology evidence="7 8">Multi-pass membrane protein</topology>
    </subcellularLocation>
</comment>
<comment type="tissue specificity">
    <text>Brain, testis, muscle and kidney.</text>
</comment>
<comment type="similarity">
    <text evidence="9">Belongs to the chloride channel (TC 2.A.49) family. ClC-7/CLCN7 subfamily.</text>
</comment>
<evidence type="ECO:0000250" key="1"/>
<evidence type="ECO:0000250" key="2">
    <source>
        <dbReference type="UniProtKB" id="O70496"/>
    </source>
</evidence>
<evidence type="ECO:0000250" key="3">
    <source>
        <dbReference type="UniProtKB" id="P35523"/>
    </source>
</evidence>
<evidence type="ECO:0000250" key="4">
    <source>
        <dbReference type="UniProtKB" id="P51798"/>
    </source>
</evidence>
<evidence type="ECO:0000255" key="5">
    <source>
        <dbReference type="PROSITE-ProRule" id="PRU00703"/>
    </source>
</evidence>
<evidence type="ECO:0000256" key="6">
    <source>
        <dbReference type="SAM" id="MobiDB-lite"/>
    </source>
</evidence>
<evidence type="ECO:0000269" key="7">
    <source>
    </source>
</evidence>
<evidence type="ECO:0000269" key="8">
    <source>
    </source>
</evidence>
<evidence type="ECO:0000305" key="9"/>